<gene>
    <name evidence="1" type="primary">upp</name>
    <name type="ordered locus">VC0395_A1818</name>
    <name type="ordered locus">VC395_2341</name>
</gene>
<evidence type="ECO:0000255" key="1">
    <source>
        <dbReference type="HAMAP-Rule" id="MF_01218"/>
    </source>
</evidence>
<comment type="function">
    <text evidence="1">Catalyzes the conversion of uracil and 5-phospho-alpha-D-ribose 1-diphosphate (PRPP) to UMP and diphosphate.</text>
</comment>
<comment type="catalytic activity">
    <reaction evidence="1">
        <text>UMP + diphosphate = 5-phospho-alpha-D-ribose 1-diphosphate + uracil</text>
        <dbReference type="Rhea" id="RHEA:13017"/>
        <dbReference type="ChEBI" id="CHEBI:17568"/>
        <dbReference type="ChEBI" id="CHEBI:33019"/>
        <dbReference type="ChEBI" id="CHEBI:57865"/>
        <dbReference type="ChEBI" id="CHEBI:58017"/>
        <dbReference type="EC" id="2.4.2.9"/>
    </reaction>
</comment>
<comment type="cofactor">
    <cofactor evidence="1">
        <name>Mg(2+)</name>
        <dbReference type="ChEBI" id="CHEBI:18420"/>
    </cofactor>
    <text evidence="1">Binds 1 Mg(2+) ion per subunit. The magnesium is bound as Mg-PRPP.</text>
</comment>
<comment type="activity regulation">
    <text evidence="1">Allosterically activated by GTP.</text>
</comment>
<comment type="pathway">
    <text evidence="1">Pyrimidine metabolism; UMP biosynthesis via salvage pathway; UMP from uracil: step 1/1.</text>
</comment>
<comment type="similarity">
    <text evidence="1">Belongs to the UPRTase family.</text>
</comment>
<protein>
    <recommendedName>
        <fullName evidence="1">Uracil phosphoribosyltransferase</fullName>
        <ecNumber evidence="1">2.4.2.9</ecNumber>
    </recommendedName>
    <alternativeName>
        <fullName evidence="1">UMP pyrophosphorylase</fullName>
    </alternativeName>
    <alternativeName>
        <fullName evidence="1">UPRTase</fullName>
    </alternativeName>
</protein>
<organism>
    <name type="scientific">Vibrio cholerae serotype O1 (strain ATCC 39541 / Classical Ogawa 395 / O395)</name>
    <dbReference type="NCBI Taxonomy" id="345073"/>
    <lineage>
        <taxon>Bacteria</taxon>
        <taxon>Pseudomonadati</taxon>
        <taxon>Pseudomonadota</taxon>
        <taxon>Gammaproteobacteria</taxon>
        <taxon>Vibrionales</taxon>
        <taxon>Vibrionaceae</taxon>
        <taxon>Vibrio</taxon>
    </lineage>
</organism>
<sequence length="208" mass="22680">MKIVEVKHPLVKHKLGLMREGDISTKRFRELATEVASLLTYEATSDFETEKVTIEGWNGPVQVDQIKGKKVTVVPILRAGLGMMDGVLEHIPSARISVVGIYRDEETLEPVPYFNKLATNIEERIAMVVDPMLATGGSMIATIDLLKEKGCNQIKVLVLVAAPEGIAALEKAHPDVELYTAAIDEKLNDKGYIVPGLGDAGDKIFGTK</sequence>
<feature type="chain" id="PRO_1000073132" description="Uracil phosphoribosyltransferase">
    <location>
        <begin position="1"/>
        <end position="208"/>
    </location>
</feature>
<feature type="binding site" evidence="1">
    <location>
        <position position="78"/>
    </location>
    <ligand>
        <name>5-phospho-alpha-D-ribose 1-diphosphate</name>
        <dbReference type="ChEBI" id="CHEBI:58017"/>
    </ligand>
</feature>
<feature type="binding site" evidence="1">
    <location>
        <position position="103"/>
    </location>
    <ligand>
        <name>5-phospho-alpha-D-ribose 1-diphosphate</name>
        <dbReference type="ChEBI" id="CHEBI:58017"/>
    </ligand>
</feature>
<feature type="binding site" evidence="1">
    <location>
        <begin position="130"/>
        <end position="138"/>
    </location>
    <ligand>
        <name>5-phospho-alpha-D-ribose 1-diphosphate</name>
        <dbReference type="ChEBI" id="CHEBI:58017"/>
    </ligand>
</feature>
<feature type="binding site" evidence="1">
    <location>
        <position position="193"/>
    </location>
    <ligand>
        <name>uracil</name>
        <dbReference type="ChEBI" id="CHEBI:17568"/>
    </ligand>
</feature>
<feature type="binding site" evidence="1">
    <location>
        <begin position="198"/>
        <end position="200"/>
    </location>
    <ligand>
        <name>uracil</name>
        <dbReference type="ChEBI" id="CHEBI:17568"/>
    </ligand>
</feature>
<feature type="binding site" evidence="1">
    <location>
        <position position="199"/>
    </location>
    <ligand>
        <name>5-phospho-alpha-D-ribose 1-diphosphate</name>
        <dbReference type="ChEBI" id="CHEBI:58017"/>
    </ligand>
</feature>
<proteinExistence type="inferred from homology"/>
<accession>A5F642</accession>
<accession>C3M3I2</accession>
<name>UPP_VIBC3</name>
<reference key="1">
    <citation type="submission" date="2007-03" db="EMBL/GenBank/DDBJ databases">
        <authorList>
            <person name="Heidelberg J."/>
        </authorList>
    </citation>
    <scope>NUCLEOTIDE SEQUENCE [LARGE SCALE GENOMIC DNA]</scope>
    <source>
        <strain>ATCC 39541 / Classical Ogawa 395 / O395</strain>
    </source>
</reference>
<reference key="2">
    <citation type="journal article" date="2008" name="PLoS ONE">
        <title>A recalibrated molecular clock and independent origins for the cholera pandemic clones.</title>
        <authorList>
            <person name="Feng L."/>
            <person name="Reeves P.R."/>
            <person name="Lan R."/>
            <person name="Ren Y."/>
            <person name="Gao C."/>
            <person name="Zhou Z."/>
            <person name="Ren Y."/>
            <person name="Cheng J."/>
            <person name="Wang W."/>
            <person name="Wang J."/>
            <person name="Qian W."/>
            <person name="Li D."/>
            <person name="Wang L."/>
        </authorList>
    </citation>
    <scope>NUCLEOTIDE SEQUENCE [LARGE SCALE GENOMIC DNA]</scope>
    <source>
        <strain>ATCC 39541 / Classical Ogawa 395 / O395</strain>
    </source>
</reference>
<dbReference type="EC" id="2.4.2.9" evidence="1"/>
<dbReference type="EMBL" id="CP000627">
    <property type="protein sequence ID" value="ABQ21619.1"/>
    <property type="molecule type" value="Genomic_DNA"/>
</dbReference>
<dbReference type="EMBL" id="CP001235">
    <property type="protein sequence ID" value="ACP10331.1"/>
    <property type="molecule type" value="Genomic_DNA"/>
</dbReference>
<dbReference type="RefSeq" id="WP_001887652.1">
    <property type="nucleotide sequence ID" value="NZ_JAACZH010000022.1"/>
</dbReference>
<dbReference type="SMR" id="A5F642"/>
<dbReference type="GeneID" id="89513786"/>
<dbReference type="KEGG" id="vco:VC0395_A1818"/>
<dbReference type="KEGG" id="vcr:VC395_2341"/>
<dbReference type="PATRIC" id="fig|345073.21.peg.2257"/>
<dbReference type="eggNOG" id="COG0035">
    <property type="taxonomic scope" value="Bacteria"/>
</dbReference>
<dbReference type="HOGENOM" id="CLU_067096_2_2_6"/>
<dbReference type="OrthoDB" id="9781675at2"/>
<dbReference type="UniPathway" id="UPA00574">
    <property type="reaction ID" value="UER00636"/>
</dbReference>
<dbReference type="Proteomes" id="UP000000249">
    <property type="component" value="Chromosome 2"/>
</dbReference>
<dbReference type="GO" id="GO:0005525">
    <property type="term" value="F:GTP binding"/>
    <property type="evidence" value="ECO:0007669"/>
    <property type="project" value="UniProtKB-KW"/>
</dbReference>
<dbReference type="GO" id="GO:0000287">
    <property type="term" value="F:magnesium ion binding"/>
    <property type="evidence" value="ECO:0007669"/>
    <property type="project" value="UniProtKB-UniRule"/>
</dbReference>
<dbReference type="GO" id="GO:0004845">
    <property type="term" value="F:uracil phosphoribosyltransferase activity"/>
    <property type="evidence" value="ECO:0007669"/>
    <property type="project" value="UniProtKB-UniRule"/>
</dbReference>
<dbReference type="GO" id="GO:0044206">
    <property type="term" value="P:UMP salvage"/>
    <property type="evidence" value="ECO:0007669"/>
    <property type="project" value="UniProtKB-UniRule"/>
</dbReference>
<dbReference type="GO" id="GO:0006223">
    <property type="term" value="P:uracil salvage"/>
    <property type="evidence" value="ECO:0007669"/>
    <property type="project" value="InterPro"/>
</dbReference>
<dbReference type="CDD" id="cd06223">
    <property type="entry name" value="PRTases_typeI"/>
    <property type="match status" value="1"/>
</dbReference>
<dbReference type="FunFam" id="3.40.50.2020:FF:000003">
    <property type="entry name" value="Uracil phosphoribosyltransferase"/>
    <property type="match status" value="1"/>
</dbReference>
<dbReference type="Gene3D" id="3.40.50.2020">
    <property type="match status" value="1"/>
</dbReference>
<dbReference type="HAMAP" id="MF_01218_B">
    <property type="entry name" value="Upp_B"/>
    <property type="match status" value="1"/>
</dbReference>
<dbReference type="InterPro" id="IPR000836">
    <property type="entry name" value="PRibTrfase_dom"/>
</dbReference>
<dbReference type="InterPro" id="IPR029057">
    <property type="entry name" value="PRTase-like"/>
</dbReference>
<dbReference type="InterPro" id="IPR034332">
    <property type="entry name" value="Upp_B"/>
</dbReference>
<dbReference type="InterPro" id="IPR050054">
    <property type="entry name" value="UPRTase/APRTase"/>
</dbReference>
<dbReference type="InterPro" id="IPR005765">
    <property type="entry name" value="Ura_phspho_trans"/>
</dbReference>
<dbReference type="NCBIfam" id="NF001097">
    <property type="entry name" value="PRK00129.1"/>
    <property type="match status" value="1"/>
</dbReference>
<dbReference type="NCBIfam" id="TIGR01091">
    <property type="entry name" value="upp"/>
    <property type="match status" value="1"/>
</dbReference>
<dbReference type="PANTHER" id="PTHR32315">
    <property type="entry name" value="ADENINE PHOSPHORIBOSYLTRANSFERASE"/>
    <property type="match status" value="1"/>
</dbReference>
<dbReference type="PANTHER" id="PTHR32315:SF4">
    <property type="entry name" value="URACIL PHOSPHORIBOSYLTRANSFERASE, CHLOROPLASTIC"/>
    <property type="match status" value="1"/>
</dbReference>
<dbReference type="Pfam" id="PF14681">
    <property type="entry name" value="UPRTase"/>
    <property type="match status" value="1"/>
</dbReference>
<dbReference type="SUPFAM" id="SSF53271">
    <property type="entry name" value="PRTase-like"/>
    <property type="match status" value="1"/>
</dbReference>
<keyword id="KW-0021">Allosteric enzyme</keyword>
<keyword id="KW-0328">Glycosyltransferase</keyword>
<keyword id="KW-0342">GTP-binding</keyword>
<keyword id="KW-0460">Magnesium</keyword>
<keyword id="KW-0547">Nucleotide-binding</keyword>
<keyword id="KW-0808">Transferase</keyword>